<reference key="1">
    <citation type="journal article" date="2009" name="J. Bacteriol.">
        <title>Genomic sequencing reveals regulatory mutations and recombinational events in the widely used MC4100 lineage of Escherichia coli K-12.</title>
        <authorList>
            <person name="Ferenci T."/>
            <person name="Zhou Z."/>
            <person name="Betteridge T."/>
            <person name="Ren Y."/>
            <person name="Liu Y."/>
            <person name="Feng L."/>
            <person name="Reeves P.R."/>
            <person name="Wang L."/>
        </authorList>
    </citation>
    <scope>NUCLEOTIDE SEQUENCE [LARGE SCALE GENOMIC DNA]</scope>
    <source>
        <strain>K12 / MC4100 / BW2952</strain>
    </source>
</reference>
<accession>C4ZZ18</accession>
<feature type="chain" id="PRO_1000202498" description="Ribosomal RNA small subunit methyltransferase G">
    <location>
        <begin position="1"/>
        <end position="207"/>
    </location>
</feature>
<feature type="binding site" evidence="1">
    <location>
        <position position="73"/>
    </location>
    <ligand>
        <name>S-adenosyl-L-methionine</name>
        <dbReference type="ChEBI" id="CHEBI:59789"/>
    </ligand>
</feature>
<feature type="binding site" evidence="1">
    <location>
        <position position="78"/>
    </location>
    <ligand>
        <name>S-adenosyl-L-methionine</name>
        <dbReference type="ChEBI" id="CHEBI:59789"/>
    </ligand>
</feature>
<feature type="binding site" evidence="1">
    <location>
        <begin position="124"/>
        <end position="125"/>
    </location>
    <ligand>
        <name>S-adenosyl-L-methionine</name>
        <dbReference type="ChEBI" id="CHEBI:59789"/>
    </ligand>
</feature>
<feature type="binding site" evidence="1">
    <location>
        <position position="139"/>
    </location>
    <ligand>
        <name>S-adenosyl-L-methionine</name>
        <dbReference type="ChEBI" id="CHEBI:59789"/>
    </ligand>
</feature>
<name>RSMG_ECOBW</name>
<protein>
    <recommendedName>
        <fullName evidence="1">Ribosomal RNA small subunit methyltransferase G</fullName>
        <ecNumber evidence="1">2.1.1.170</ecNumber>
    </recommendedName>
    <alternativeName>
        <fullName evidence="1">16S rRNA 7-methylguanosine methyltransferase</fullName>
        <shortName evidence="1">16S rRNA m7G methyltransferase</shortName>
    </alternativeName>
</protein>
<organism>
    <name type="scientific">Escherichia coli (strain K12 / MC4100 / BW2952)</name>
    <dbReference type="NCBI Taxonomy" id="595496"/>
    <lineage>
        <taxon>Bacteria</taxon>
        <taxon>Pseudomonadati</taxon>
        <taxon>Pseudomonadota</taxon>
        <taxon>Gammaproteobacteria</taxon>
        <taxon>Enterobacterales</taxon>
        <taxon>Enterobacteriaceae</taxon>
        <taxon>Escherichia</taxon>
    </lineage>
</organism>
<dbReference type="EC" id="2.1.1.170" evidence="1"/>
<dbReference type="EMBL" id="CP001396">
    <property type="protein sequence ID" value="ACR63771.1"/>
    <property type="molecule type" value="Genomic_DNA"/>
</dbReference>
<dbReference type="RefSeq" id="WP_000932839.1">
    <property type="nucleotide sequence ID" value="NC_012759.1"/>
</dbReference>
<dbReference type="SMR" id="C4ZZ18"/>
<dbReference type="GeneID" id="93778227"/>
<dbReference type="KEGG" id="ebw:BWG_3431"/>
<dbReference type="HOGENOM" id="CLU_065341_2_2_6"/>
<dbReference type="GO" id="GO:0005829">
    <property type="term" value="C:cytosol"/>
    <property type="evidence" value="ECO:0007669"/>
    <property type="project" value="TreeGrafter"/>
</dbReference>
<dbReference type="GO" id="GO:0070043">
    <property type="term" value="F:rRNA (guanine-N7-)-methyltransferase activity"/>
    <property type="evidence" value="ECO:0007669"/>
    <property type="project" value="UniProtKB-UniRule"/>
</dbReference>
<dbReference type="CDD" id="cd02440">
    <property type="entry name" value="AdoMet_MTases"/>
    <property type="match status" value="1"/>
</dbReference>
<dbReference type="FunFam" id="3.40.50.150:FF:000032">
    <property type="entry name" value="Ribosomal RNA small subunit methyltransferase G"/>
    <property type="match status" value="1"/>
</dbReference>
<dbReference type="Gene3D" id="3.40.50.150">
    <property type="entry name" value="Vaccinia Virus protein VP39"/>
    <property type="match status" value="1"/>
</dbReference>
<dbReference type="HAMAP" id="MF_00074">
    <property type="entry name" value="16SrRNA_methyltr_G"/>
    <property type="match status" value="1"/>
</dbReference>
<dbReference type="InterPro" id="IPR003682">
    <property type="entry name" value="rRNA_ssu_MeTfrase_G"/>
</dbReference>
<dbReference type="InterPro" id="IPR029063">
    <property type="entry name" value="SAM-dependent_MTases_sf"/>
</dbReference>
<dbReference type="NCBIfam" id="TIGR00138">
    <property type="entry name" value="rsmG_gidB"/>
    <property type="match status" value="1"/>
</dbReference>
<dbReference type="PANTHER" id="PTHR31760">
    <property type="entry name" value="S-ADENOSYL-L-METHIONINE-DEPENDENT METHYLTRANSFERASES SUPERFAMILY PROTEIN"/>
    <property type="match status" value="1"/>
</dbReference>
<dbReference type="PANTHER" id="PTHR31760:SF0">
    <property type="entry name" value="S-ADENOSYL-L-METHIONINE-DEPENDENT METHYLTRANSFERASES SUPERFAMILY PROTEIN"/>
    <property type="match status" value="1"/>
</dbReference>
<dbReference type="Pfam" id="PF02527">
    <property type="entry name" value="GidB"/>
    <property type="match status" value="1"/>
</dbReference>
<dbReference type="PIRSF" id="PIRSF003078">
    <property type="entry name" value="GidB"/>
    <property type="match status" value="1"/>
</dbReference>
<dbReference type="SUPFAM" id="SSF53335">
    <property type="entry name" value="S-adenosyl-L-methionine-dependent methyltransferases"/>
    <property type="match status" value="1"/>
</dbReference>
<evidence type="ECO:0000255" key="1">
    <source>
        <dbReference type="HAMAP-Rule" id="MF_00074"/>
    </source>
</evidence>
<sequence length="207" mass="23431">MLNKLSLLLKDAGISLTDHQKNQLIAYVNMLHKWNKAYNLTSVRDPNEMLVRHILDSIVVAPYLQGERFIDVGTGPGLPGIPLSIVRPEAHFTLLDSLGKRVRFLRQVQHELKLENIEPVQSRVEEFPSEPPFDGVISRAFASLNDMVSWCHHLPGEQGRFYALKGQMPEDEIALLPEEYQVESVVKLQVPALDGERHLVVIKANKI</sequence>
<comment type="function">
    <text evidence="1">Specifically methylates the N7 position of guanine in position 527 of 16S rRNA.</text>
</comment>
<comment type="catalytic activity">
    <reaction evidence="1">
        <text>guanosine(527) in 16S rRNA + S-adenosyl-L-methionine = N(7)-methylguanosine(527) in 16S rRNA + S-adenosyl-L-homocysteine</text>
        <dbReference type="Rhea" id="RHEA:42732"/>
        <dbReference type="Rhea" id="RHEA-COMP:10209"/>
        <dbReference type="Rhea" id="RHEA-COMP:10210"/>
        <dbReference type="ChEBI" id="CHEBI:57856"/>
        <dbReference type="ChEBI" id="CHEBI:59789"/>
        <dbReference type="ChEBI" id="CHEBI:74269"/>
        <dbReference type="ChEBI" id="CHEBI:74480"/>
        <dbReference type="EC" id="2.1.1.170"/>
    </reaction>
</comment>
<comment type="subcellular location">
    <subcellularLocation>
        <location evidence="1">Cytoplasm</location>
    </subcellularLocation>
</comment>
<comment type="similarity">
    <text evidence="1">Belongs to the methyltransferase superfamily. RNA methyltransferase RsmG family.</text>
</comment>
<proteinExistence type="inferred from homology"/>
<keyword id="KW-0963">Cytoplasm</keyword>
<keyword id="KW-0489">Methyltransferase</keyword>
<keyword id="KW-0698">rRNA processing</keyword>
<keyword id="KW-0949">S-adenosyl-L-methionine</keyword>
<keyword id="KW-0808">Transferase</keyword>
<gene>
    <name evidence="1" type="primary">rsmG</name>
    <name type="ordered locus">BWG_3431</name>
</gene>